<accession>Q3K6L0</accession>
<name>PROB_PSEPF</name>
<evidence type="ECO:0000255" key="1">
    <source>
        <dbReference type="HAMAP-Rule" id="MF_00456"/>
    </source>
</evidence>
<evidence type="ECO:0000305" key="2"/>
<keyword id="KW-0028">Amino-acid biosynthesis</keyword>
<keyword id="KW-0067">ATP-binding</keyword>
<keyword id="KW-0963">Cytoplasm</keyword>
<keyword id="KW-0418">Kinase</keyword>
<keyword id="KW-0547">Nucleotide-binding</keyword>
<keyword id="KW-0641">Proline biosynthesis</keyword>
<keyword id="KW-0808">Transferase</keyword>
<proteinExistence type="inferred from homology"/>
<protein>
    <recommendedName>
        <fullName evidence="1">Glutamate 5-kinase</fullName>
        <ecNumber evidence="1">2.7.2.11</ecNumber>
    </recommendedName>
    <alternativeName>
        <fullName evidence="1">Gamma-glutamyl kinase</fullName>
        <shortName evidence="1">GK</shortName>
    </alternativeName>
</protein>
<feature type="chain" id="PRO_0000230058" description="Glutamate 5-kinase">
    <location>
        <begin position="1"/>
        <end position="372"/>
    </location>
</feature>
<feature type="domain" description="PUA" evidence="1">
    <location>
        <begin position="280"/>
        <end position="358"/>
    </location>
</feature>
<feature type="binding site" evidence="1">
    <location>
        <position position="14"/>
    </location>
    <ligand>
        <name>ATP</name>
        <dbReference type="ChEBI" id="CHEBI:30616"/>
    </ligand>
</feature>
<feature type="binding site" evidence="1">
    <location>
        <position position="54"/>
    </location>
    <ligand>
        <name>substrate</name>
    </ligand>
</feature>
<feature type="binding site" evidence="1">
    <location>
        <position position="141"/>
    </location>
    <ligand>
        <name>substrate</name>
    </ligand>
</feature>
<feature type="binding site" evidence="1">
    <location>
        <position position="153"/>
    </location>
    <ligand>
        <name>substrate</name>
    </ligand>
</feature>
<feature type="binding site" evidence="1">
    <location>
        <begin position="173"/>
        <end position="174"/>
    </location>
    <ligand>
        <name>ATP</name>
        <dbReference type="ChEBI" id="CHEBI:30616"/>
    </ligand>
</feature>
<sequence length="372" mass="39622">MRSKVTGAQRWVVKIGSALLTADGKGLDRTAMGVWVEQMVALHEAGVELVLVSSGAVAAGMSRLGWTARPSAMHELQAAAAIGQMGLVQAWESSFAEHGRHTAQILLTHDDLSDRKRYLNARSTLRALVELKVIPVINENDTVVTDEIRFGDNDTLAALVANLVEADLLVILTDRDGMFDADPRSNPDAQLIYEARADDPTLDAVAGGTGGALGRGGMQTKLRAARLAARSGAHTIIVGGRLERVLDRLKAGERIGTLLSPERGMLAARKQWLAGHLQTRGTLVLDDGAVSALSQGNKSLLPVGVKLVQGSFRRGEMVVCVAPDGREIARGLANYSALEAQKIIGQSSDAIVGLLGYMAEPELVHRDNLILV</sequence>
<reference key="1">
    <citation type="journal article" date="2009" name="Genome Biol.">
        <title>Genomic and genetic analyses of diversity and plant interactions of Pseudomonas fluorescens.</title>
        <authorList>
            <person name="Silby M.W."/>
            <person name="Cerdeno-Tarraga A.M."/>
            <person name="Vernikos G.S."/>
            <person name="Giddens S.R."/>
            <person name="Jackson R.W."/>
            <person name="Preston G.M."/>
            <person name="Zhang X.-X."/>
            <person name="Moon C.D."/>
            <person name="Gehrig S.M."/>
            <person name="Godfrey S.A.C."/>
            <person name="Knight C.G."/>
            <person name="Malone J.G."/>
            <person name="Robinson Z."/>
            <person name="Spiers A.J."/>
            <person name="Harris S."/>
            <person name="Challis G.L."/>
            <person name="Yaxley A.M."/>
            <person name="Harris D."/>
            <person name="Seeger K."/>
            <person name="Murphy L."/>
            <person name="Rutter S."/>
            <person name="Squares R."/>
            <person name="Quail M.A."/>
            <person name="Saunders E."/>
            <person name="Mavromatis K."/>
            <person name="Brettin T.S."/>
            <person name="Bentley S.D."/>
            <person name="Hothersall J."/>
            <person name="Stephens E."/>
            <person name="Thomas C.M."/>
            <person name="Parkhill J."/>
            <person name="Levy S.B."/>
            <person name="Rainey P.B."/>
            <person name="Thomson N.R."/>
        </authorList>
    </citation>
    <scope>NUCLEOTIDE SEQUENCE [LARGE SCALE GENOMIC DNA]</scope>
    <source>
        <strain>Pf0-1</strain>
    </source>
</reference>
<organism>
    <name type="scientific">Pseudomonas fluorescens (strain Pf0-1)</name>
    <dbReference type="NCBI Taxonomy" id="205922"/>
    <lineage>
        <taxon>Bacteria</taxon>
        <taxon>Pseudomonadati</taxon>
        <taxon>Pseudomonadota</taxon>
        <taxon>Gammaproteobacteria</taxon>
        <taxon>Pseudomonadales</taxon>
        <taxon>Pseudomonadaceae</taxon>
        <taxon>Pseudomonas</taxon>
    </lineage>
</organism>
<dbReference type="EC" id="2.7.2.11" evidence="1"/>
<dbReference type="EMBL" id="CP000094">
    <property type="protein sequence ID" value="ABA76594.1"/>
    <property type="status" value="ALT_INIT"/>
    <property type="molecule type" value="Genomic_DNA"/>
</dbReference>
<dbReference type="RefSeq" id="WP_041475432.1">
    <property type="nucleotide sequence ID" value="NC_007492.2"/>
</dbReference>
<dbReference type="SMR" id="Q3K6L0"/>
<dbReference type="KEGG" id="pfo:Pfl01_4857"/>
<dbReference type="eggNOG" id="COG0263">
    <property type="taxonomic scope" value="Bacteria"/>
</dbReference>
<dbReference type="HOGENOM" id="CLU_025400_2_0_6"/>
<dbReference type="UniPathway" id="UPA00098">
    <property type="reaction ID" value="UER00359"/>
</dbReference>
<dbReference type="Proteomes" id="UP000002704">
    <property type="component" value="Chromosome"/>
</dbReference>
<dbReference type="GO" id="GO:0005829">
    <property type="term" value="C:cytosol"/>
    <property type="evidence" value="ECO:0007669"/>
    <property type="project" value="TreeGrafter"/>
</dbReference>
<dbReference type="GO" id="GO:0005524">
    <property type="term" value="F:ATP binding"/>
    <property type="evidence" value="ECO:0007669"/>
    <property type="project" value="UniProtKB-KW"/>
</dbReference>
<dbReference type="GO" id="GO:0004349">
    <property type="term" value="F:glutamate 5-kinase activity"/>
    <property type="evidence" value="ECO:0007669"/>
    <property type="project" value="UniProtKB-UniRule"/>
</dbReference>
<dbReference type="GO" id="GO:0003723">
    <property type="term" value="F:RNA binding"/>
    <property type="evidence" value="ECO:0007669"/>
    <property type="project" value="InterPro"/>
</dbReference>
<dbReference type="GO" id="GO:0055129">
    <property type="term" value="P:L-proline biosynthetic process"/>
    <property type="evidence" value="ECO:0007669"/>
    <property type="project" value="UniProtKB-UniRule"/>
</dbReference>
<dbReference type="CDD" id="cd04242">
    <property type="entry name" value="AAK_G5K_ProB"/>
    <property type="match status" value="1"/>
</dbReference>
<dbReference type="CDD" id="cd21157">
    <property type="entry name" value="PUA_G5K"/>
    <property type="match status" value="1"/>
</dbReference>
<dbReference type="FunFam" id="2.30.130.10:FF:000007">
    <property type="entry name" value="Glutamate 5-kinase"/>
    <property type="match status" value="1"/>
</dbReference>
<dbReference type="FunFam" id="3.40.1160.10:FF:000018">
    <property type="entry name" value="Glutamate 5-kinase"/>
    <property type="match status" value="1"/>
</dbReference>
<dbReference type="Gene3D" id="3.40.1160.10">
    <property type="entry name" value="Acetylglutamate kinase-like"/>
    <property type="match status" value="2"/>
</dbReference>
<dbReference type="Gene3D" id="2.30.130.10">
    <property type="entry name" value="PUA domain"/>
    <property type="match status" value="1"/>
</dbReference>
<dbReference type="HAMAP" id="MF_00456">
    <property type="entry name" value="ProB"/>
    <property type="match status" value="1"/>
</dbReference>
<dbReference type="InterPro" id="IPR036393">
    <property type="entry name" value="AceGlu_kinase-like_sf"/>
</dbReference>
<dbReference type="InterPro" id="IPR001048">
    <property type="entry name" value="Asp/Glu/Uridylate_kinase"/>
</dbReference>
<dbReference type="InterPro" id="IPR041739">
    <property type="entry name" value="G5K_ProB"/>
</dbReference>
<dbReference type="InterPro" id="IPR001057">
    <property type="entry name" value="Glu/AcGlu_kinase"/>
</dbReference>
<dbReference type="InterPro" id="IPR011529">
    <property type="entry name" value="Glu_5kinase"/>
</dbReference>
<dbReference type="InterPro" id="IPR005715">
    <property type="entry name" value="Glu_5kinase/COase_Synthase"/>
</dbReference>
<dbReference type="InterPro" id="IPR019797">
    <property type="entry name" value="Glutamate_5-kinase_CS"/>
</dbReference>
<dbReference type="InterPro" id="IPR002478">
    <property type="entry name" value="PUA"/>
</dbReference>
<dbReference type="InterPro" id="IPR015947">
    <property type="entry name" value="PUA-like_sf"/>
</dbReference>
<dbReference type="InterPro" id="IPR036974">
    <property type="entry name" value="PUA_sf"/>
</dbReference>
<dbReference type="NCBIfam" id="TIGR01027">
    <property type="entry name" value="proB"/>
    <property type="match status" value="1"/>
</dbReference>
<dbReference type="PANTHER" id="PTHR43654">
    <property type="entry name" value="GLUTAMATE 5-KINASE"/>
    <property type="match status" value="1"/>
</dbReference>
<dbReference type="PANTHER" id="PTHR43654:SF1">
    <property type="entry name" value="ISOPENTENYL PHOSPHATE KINASE"/>
    <property type="match status" value="1"/>
</dbReference>
<dbReference type="Pfam" id="PF00696">
    <property type="entry name" value="AA_kinase"/>
    <property type="match status" value="1"/>
</dbReference>
<dbReference type="Pfam" id="PF01472">
    <property type="entry name" value="PUA"/>
    <property type="match status" value="1"/>
</dbReference>
<dbReference type="PIRSF" id="PIRSF000729">
    <property type="entry name" value="GK"/>
    <property type="match status" value="1"/>
</dbReference>
<dbReference type="PRINTS" id="PR00474">
    <property type="entry name" value="GLU5KINASE"/>
</dbReference>
<dbReference type="SMART" id="SM00359">
    <property type="entry name" value="PUA"/>
    <property type="match status" value="1"/>
</dbReference>
<dbReference type="SUPFAM" id="SSF53633">
    <property type="entry name" value="Carbamate kinase-like"/>
    <property type="match status" value="1"/>
</dbReference>
<dbReference type="SUPFAM" id="SSF88697">
    <property type="entry name" value="PUA domain-like"/>
    <property type="match status" value="1"/>
</dbReference>
<dbReference type="PROSITE" id="PS00902">
    <property type="entry name" value="GLUTAMATE_5_KINASE"/>
    <property type="match status" value="1"/>
</dbReference>
<dbReference type="PROSITE" id="PS50890">
    <property type="entry name" value="PUA"/>
    <property type="match status" value="1"/>
</dbReference>
<gene>
    <name evidence="1" type="primary">proB</name>
    <name type="ordered locus">Pfl01_4857</name>
</gene>
<comment type="function">
    <text evidence="1">Catalyzes the transfer of a phosphate group to glutamate to form L-glutamate 5-phosphate.</text>
</comment>
<comment type="catalytic activity">
    <reaction evidence="1">
        <text>L-glutamate + ATP = L-glutamyl 5-phosphate + ADP</text>
        <dbReference type="Rhea" id="RHEA:14877"/>
        <dbReference type="ChEBI" id="CHEBI:29985"/>
        <dbReference type="ChEBI" id="CHEBI:30616"/>
        <dbReference type="ChEBI" id="CHEBI:58274"/>
        <dbReference type="ChEBI" id="CHEBI:456216"/>
        <dbReference type="EC" id="2.7.2.11"/>
    </reaction>
</comment>
<comment type="pathway">
    <text evidence="1">Amino-acid biosynthesis; L-proline biosynthesis; L-glutamate 5-semialdehyde from L-glutamate: step 1/2.</text>
</comment>
<comment type="subcellular location">
    <subcellularLocation>
        <location evidence="1">Cytoplasm</location>
    </subcellularLocation>
</comment>
<comment type="similarity">
    <text evidence="1">Belongs to the glutamate 5-kinase family.</text>
</comment>
<comment type="sequence caution" evidence="2">
    <conflict type="erroneous initiation">
        <sequence resource="EMBL-CDS" id="ABA76594"/>
    </conflict>
</comment>